<feature type="chain" id="PRO_0000148404" description="Dihydroorotate dehydrogenase B (NAD(+)), catalytic subunit">
    <location>
        <begin position="1"/>
        <end position="270"/>
    </location>
</feature>
<feature type="active site" description="Nucleophile">
    <location>
        <position position="117"/>
    </location>
</feature>
<feature type="binding site" evidence="1">
    <location>
        <position position="12"/>
    </location>
    <ligand>
        <name>FMN</name>
        <dbReference type="ChEBI" id="CHEBI:58210"/>
    </ligand>
</feature>
<feature type="binding site" evidence="1">
    <location>
        <begin position="35"/>
        <end position="36"/>
    </location>
    <ligand>
        <name>FMN</name>
        <dbReference type="ChEBI" id="CHEBI:58210"/>
    </ligand>
</feature>
<feature type="binding site" evidence="1">
    <location>
        <position position="35"/>
    </location>
    <ligand>
        <name>substrate</name>
    </ligand>
</feature>
<feature type="binding site" evidence="1">
    <location>
        <begin position="59"/>
        <end position="63"/>
    </location>
    <ligand>
        <name>substrate</name>
    </ligand>
</feature>
<feature type="binding site" evidence="1">
    <location>
        <position position="114"/>
    </location>
    <ligand>
        <name>FMN</name>
        <dbReference type="ChEBI" id="CHEBI:58210"/>
    </ligand>
</feature>
<feature type="binding site" evidence="1">
    <location>
        <position position="114"/>
    </location>
    <ligand>
        <name>substrate</name>
    </ligand>
</feature>
<feature type="binding site" evidence="1">
    <location>
        <position position="153"/>
    </location>
    <ligand>
        <name>FMN</name>
        <dbReference type="ChEBI" id="CHEBI:58210"/>
    </ligand>
</feature>
<feature type="binding site" evidence="1">
    <location>
        <position position="179"/>
    </location>
    <ligand>
        <name>FMN</name>
        <dbReference type="ChEBI" id="CHEBI:58210"/>
    </ligand>
</feature>
<feature type="binding site" evidence="1">
    <location>
        <begin position="180"/>
        <end position="181"/>
    </location>
    <ligand>
        <name>substrate</name>
    </ligand>
</feature>
<feature type="binding site" evidence="1">
    <location>
        <position position="199"/>
    </location>
    <ligand>
        <name>FMN</name>
        <dbReference type="ChEBI" id="CHEBI:58210"/>
    </ligand>
</feature>
<feature type="binding site" evidence="1">
    <location>
        <begin position="226"/>
        <end position="227"/>
    </location>
    <ligand>
        <name>FMN</name>
        <dbReference type="ChEBI" id="CHEBI:58210"/>
    </ligand>
</feature>
<feature type="binding site" evidence="1">
    <location>
        <begin position="248"/>
        <end position="249"/>
    </location>
    <ligand>
        <name>FMN</name>
        <dbReference type="ChEBI" id="CHEBI:58210"/>
    </ligand>
</feature>
<reference key="1">
    <citation type="journal article" date="1999" name="Nature">
        <title>Evidence for lateral gene transfer between Archaea and Bacteria from genome sequence of Thermotoga maritima.</title>
        <authorList>
            <person name="Nelson K.E."/>
            <person name="Clayton R.A."/>
            <person name="Gill S.R."/>
            <person name="Gwinn M.L."/>
            <person name="Dodson R.J."/>
            <person name="Haft D.H."/>
            <person name="Hickey E.K."/>
            <person name="Peterson J.D."/>
            <person name="Nelson W.C."/>
            <person name="Ketchum K.A."/>
            <person name="McDonald L.A."/>
            <person name="Utterback T.R."/>
            <person name="Malek J.A."/>
            <person name="Linher K.D."/>
            <person name="Garrett M.M."/>
            <person name="Stewart A.M."/>
            <person name="Cotton M.D."/>
            <person name="Pratt M.S."/>
            <person name="Phillips C.A."/>
            <person name="Richardson D.L."/>
            <person name="Heidelberg J.F."/>
            <person name="Sutton G.G."/>
            <person name="Fleischmann R.D."/>
            <person name="Eisen J.A."/>
            <person name="White O."/>
            <person name="Salzberg S.L."/>
            <person name="Smith H.O."/>
            <person name="Venter J.C."/>
            <person name="Fraser C.M."/>
        </authorList>
    </citation>
    <scope>NUCLEOTIDE SEQUENCE [LARGE SCALE GENOMIC DNA]</scope>
    <source>
        <strain>ATCC 43589 / DSM 3109 / JCM 10099 / NBRC 100826 / MSB8</strain>
    </source>
</reference>
<protein>
    <recommendedName>
        <fullName>Dihydroorotate dehydrogenase B (NAD(+)), catalytic subunit</fullName>
        <shortName>DHOD B</shortName>
        <shortName>DHODase B</shortName>
        <shortName>DHOdehase B</shortName>
        <ecNumber>1.3.1.14</ecNumber>
    </recommendedName>
    <alternativeName>
        <fullName>Dihydroorotate oxidase B</fullName>
    </alternativeName>
    <alternativeName>
        <fullName>Orotate reductase (NADH)</fullName>
    </alternativeName>
</protein>
<evidence type="ECO:0000250" key="1"/>
<evidence type="ECO:0000305" key="2"/>
<name>PYRDB_THEMA</name>
<gene>
    <name type="primary">pyrD</name>
    <name type="ordered locus">TM_0333</name>
</gene>
<accession>Q9WYG8</accession>
<proteinExistence type="inferred from homology"/>
<dbReference type="EC" id="1.3.1.14"/>
<dbReference type="EMBL" id="AE000512">
    <property type="protein sequence ID" value="AAD35420.1"/>
    <property type="molecule type" value="Genomic_DNA"/>
</dbReference>
<dbReference type="PIR" id="G72390">
    <property type="entry name" value="G72390"/>
</dbReference>
<dbReference type="RefSeq" id="NP_228144.1">
    <property type="nucleotide sequence ID" value="NC_000853.1"/>
</dbReference>
<dbReference type="RefSeq" id="WP_004083101.1">
    <property type="nucleotide sequence ID" value="NZ_CP011107.1"/>
</dbReference>
<dbReference type="SMR" id="Q9WYG8"/>
<dbReference type="FunCoup" id="Q9WYG8">
    <property type="interactions" value="386"/>
</dbReference>
<dbReference type="STRING" id="243274.TM_0333"/>
<dbReference type="PaxDb" id="243274-THEMA_03055"/>
<dbReference type="EnsemblBacteria" id="AAD35420">
    <property type="protein sequence ID" value="AAD35420"/>
    <property type="gene ID" value="TM_0333"/>
</dbReference>
<dbReference type="KEGG" id="tma:TM0333"/>
<dbReference type="KEGG" id="tmm:Tmari_0331"/>
<dbReference type="KEGG" id="tmw:THMA_0341"/>
<dbReference type="eggNOG" id="COG0167">
    <property type="taxonomic scope" value="Bacteria"/>
</dbReference>
<dbReference type="InParanoid" id="Q9WYG8"/>
<dbReference type="OrthoDB" id="9794954at2"/>
<dbReference type="UniPathway" id="UPA00070">
    <property type="reaction ID" value="UER00945"/>
</dbReference>
<dbReference type="Proteomes" id="UP000008183">
    <property type="component" value="Chromosome"/>
</dbReference>
<dbReference type="GO" id="GO:0005737">
    <property type="term" value="C:cytoplasm"/>
    <property type="evidence" value="ECO:0000318"/>
    <property type="project" value="GO_Central"/>
</dbReference>
<dbReference type="GO" id="GO:0004589">
    <property type="term" value="F:dihydroorotate dehydrogenase (NAD+) activity"/>
    <property type="evidence" value="ECO:0007669"/>
    <property type="project" value="UniProtKB-EC"/>
</dbReference>
<dbReference type="GO" id="GO:0004152">
    <property type="term" value="F:dihydroorotate dehydrogenase activity"/>
    <property type="evidence" value="ECO:0000318"/>
    <property type="project" value="GO_Central"/>
</dbReference>
<dbReference type="GO" id="GO:0006207">
    <property type="term" value="P:'de novo' pyrimidine nucleobase biosynthetic process"/>
    <property type="evidence" value="ECO:0000318"/>
    <property type="project" value="GO_Central"/>
</dbReference>
<dbReference type="GO" id="GO:0044205">
    <property type="term" value="P:'de novo' UMP biosynthetic process"/>
    <property type="evidence" value="ECO:0007669"/>
    <property type="project" value="UniProtKB-UniRule"/>
</dbReference>
<dbReference type="FunFam" id="3.20.20.70:FF:000339">
    <property type="entry name" value="Dihydroorotate dehydrogenase family protein"/>
    <property type="match status" value="1"/>
</dbReference>
<dbReference type="Gene3D" id="3.20.20.70">
    <property type="entry name" value="Aldolase class I"/>
    <property type="match status" value="1"/>
</dbReference>
<dbReference type="HAMAP" id="MF_00224">
    <property type="entry name" value="DHO_dh_type1"/>
    <property type="match status" value="1"/>
</dbReference>
<dbReference type="InterPro" id="IPR013785">
    <property type="entry name" value="Aldolase_TIM"/>
</dbReference>
<dbReference type="InterPro" id="IPR050074">
    <property type="entry name" value="DHO_dehydrogenase"/>
</dbReference>
<dbReference type="InterPro" id="IPR024920">
    <property type="entry name" value="Dihydroorotate_DH_1"/>
</dbReference>
<dbReference type="InterPro" id="IPR012135">
    <property type="entry name" value="Dihydroorotate_DH_1_2"/>
</dbReference>
<dbReference type="InterPro" id="IPR005720">
    <property type="entry name" value="Dihydroorotate_DH_cat"/>
</dbReference>
<dbReference type="InterPro" id="IPR001295">
    <property type="entry name" value="Dihydroorotate_DH_CS"/>
</dbReference>
<dbReference type="PANTHER" id="PTHR48109:SF1">
    <property type="entry name" value="DIHYDROOROTATE DEHYDROGENASE (FUMARATE)"/>
    <property type="match status" value="1"/>
</dbReference>
<dbReference type="PANTHER" id="PTHR48109">
    <property type="entry name" value="DIHYDROOROTATE DEHYDROGENASE (QUINONE), MITOCHONDRIAL-RELATED"/>
    <property type="match status" value="1"/>
</dbReference>
<dbReference type="Pfam" id="PF01180">
    <property type="entry name" value="DHO_dh"/>
    <property type="match status" value="1"/>
</dbReference>
<dbReference type="PIRSF" id="PIRSF000164">
    <property type="entry name" value="DHO_oxidase"/>
    <property type="match status" value="1"/>
</dbReference>
<dbReference type="SUPFAM" id="SSF51395">
    <property type="entry name" value="FMN-linked oxidoreductases"/>
    <property type="match status" value="1"/>
</dbReference>
<dbReference type="PROSITE" id="PS00911">
    <property type="entry name" value="DHODEHASE_1"/>
    <property type="match status" value="1"/>
</dbReference>
<dbReference type="PROSITE" id="PS00912">
    <property type="entry name" value="DHODEHASE_2"/>
    <property type="match status" value="1"/>
</dbReference>
<comment type="function">
    <text evidence="1">Catalyzes the conversion of dihydroorotate to orotate with NAD(+) as electron acceptor.</text>
</comment>
<comment type="catalytic activity">
    <reaction>
        <text>(S)-dihydroorotate + NAD(+) = orotate + NADH + H(+)</text>
        <dbReference type="Rhea" id="RHEA:13513"/>
        <dbReference type="ChEBI" id="CHEBI:15378"/>
        <dbReference type="ChEBI" id="CHEBI:30839"/>
        <dbReference type="ChEBI" id="CHEBI:30864"/>
        <dbReference type="ChEBI" id="CHEBI:57540"/>
        <dbReference type="ChEBI" id="CHEBI:57945"/>
        <dbReference type="EC" id="1.3.1.14"/>
    </reaction>
</comment>
<comment type="cofactor">
    <cofactor evidence="1">
        <name>FMN</name>
        <dbReference type="ChEBI" id="CHEBI:58210"/>
    </cofactor>
    <text evidence="1">Binds 1 FMN per subunit.</text>
</comment>
<comment type="pathway">
    <text>Pyrimidine metabolism; UMP biosynthesis via de novo pathway; orotate from (S)-dihydroorotate (NAD(+) route): step 1/1.</text>
</comment>
<comment type="subunit">
    <text evidence="1">Heterotetramer of 2 PyrK and 2 PyrD type B subunits.</text>
</comment>
<comment type="subcellular location">
    <subcellularLocation>
        <location evidence="1">Cytoplasm</location>
    </subcellularLocation>
</comment>
<comment type="similarity">
    <text evidence="2">Belongs to the dihydroorotate dehydrogenase family. Type 1 subfamily.</text>
</comment>
<organism>
    <name type="scientific">Thermotoga maritima (strain ATCC 43589 / DSM 3109 / JCM 10099 / NBRC 100826 / MSB8)</name>
    <dbReference type="NCBI Taxonomy" id="243274"/>
    <lineage>
        <taxon>Bacteria</taxon>
        <taxon>Thermotogati</taxon>
        <taxon>Thermotogota</taxon>
        <taxon>Thermotogae</taxon>
        <taxon>Thermotogales</taxon>
        <taxon>Thermotogaceae</taxon>
        <taxon>Thermotoga</taxon>
    </lineage>
</organism>
<keyword id="KW-0963">Cytoplasm</keyword>
<keyword id="KW-0285">Flavoprotein</keyword>
<keyword id="KW-0288">FMN</keyword>
<keyword id="KW-0520">NAD</keyword>
<keyword id="KW-0560">Oxidoreductase</keyword>
<keyword id="KW-0665">Pyrimidine biosynthesis</keyword>
<keyword id="KW-1185">Reference proteome</keyword>
<sequence length="270" mass="29742">MLELKPPLVLLSGPAGFGEYLKLMDHRYVGGVLLKTVTLHPKEGNPTPRMADSDFYVINRIGLENPGIHAFVENIPELPVPMIASLGGDSFEEYLEVARVFKKVADRFYAVEFNFSCPNVKEGGLSIVKNAEEWKKLLNTLRKELPDSFLIAKVGVEGIFVEDAAEFVMKTGWDGITLVNTVRGLHFEKDTMILGGLSGPVLKPIALRAVYEVKKRFPELFVIASGGVYSVKDAEEFLKVGADVIGVGSALFKDPGVVEEIGKYLLEVKR</sequence>